<keyword id="KW-1003">Cell membrane</keyword>
<keyword id="KW-1015">Disulfide bond</keyword>
<keyword id="KW-0325">Glycoprotein</keyword>
<keyword id="KW-0336">GPI-anchor</keyword>
<keyword id="KW-0380">Hyperlipidemia</keyword>
<keyword id="KW-0446">Lipid-binding</keyword>
<keyword id="KW-0449">Lipoprotein</keyword>
<keyword id="KW-0472">Membrane</keyword>
<keyword id="KW-1185">Reference proteome</keyword>
<keyword id="KW-0732">Signal</keyword>
<keyword id="KW-0765">Sulfation</keyword>
<keyword id="KW-0813">Transport</keyword>
<gene>
    <name evidence="18" type="primary">Gpihbp1</name>
    <name evidence="17" type="synonym">Hbp1</name>
</gene>
<accession>Q9D1N2</accession>
<protein>
    <recommendedName>
        <fullName evidence="12">Glycosylphosphatidylinositol-anchored high density lipoprotein-binding protein 1</fullName>
        <shortName evidence="12">GPI-HBP1</shortName>
        <shortName evidence="12">GPI-anchored HDL-binding protein 1</shortName>
    </recommendedName>
    <alternativeName>
        <fullName evidence="12">High density lipoprotein-binding protein 1</fullName>
    </alternativeName>
</protein>
<name>HDBP1_MOUSE</name>
<evidence type="ECO:0000250" key="1">
    <source>
        <dbReference type="UniProtKB" id="Q8IV16"/>
    </source>
</evidence>
<evidence type="ECO:0000255" key="2"/>
<evidence type="ECO:0000256" key="3">
    <source>
        <dbReference type="SAM" id="MobiDB-lite"/>
    </source>
</evidence>
<evidence type="ECO:0000269" key="4">
    <source>
    </source>
</evidence>
<evidence type="ECO:0000269" key="5">
    <source>
    </source>
</evidence>
<evidence type="ECO:0000269" key="6">
    <source>
    </source>
</evidence>
<evidence type="ECO:0000269" key="7">
    <source>
    </source>
</evidence>
<evidence type="ECO:0000269" key="8">
    <source>
    </source>
</evidence>
<evidence type="ECO:0000269" key="9">
    <source>
    </source>
</evidence>
<evidence type="ECO:0000269" key="10">
    <source>
    </source>
</evidence>
<evidence type="ECO:0000269" key="11">
    <source>
    </source>
</evidence>
<evidence type="ECO:0000303" key="12">
    <source>
    </source>
</evidence>
<evidence type="ECO:0000305" key="13"/>
<evidence type="ECO:0000305" key="14">
    <source>
    </source>
</evidence>
<evidence type="ECO:0000312" key="15">
    <source>
        <dbReference type="EMBL" id="AAH61225.1"/>
    </source>
</evidence>
<evidence type="ECO:0000312" key="16">
    <source>
        <dbReference type="EMBL" id="BAB22704.1"/>
    </source>
</evidence>
<evidence type="ECO:0000312" key="17">
    <source>
        <dbReference type="EMBL" id="BAC23061.1"/>
    </source>
</evidence>
<evidence type="ECO:0000312" key="18">
    <source>
        <dbReference type="MGI" id="MGI:1915703"/>
    </source>
</evidence>
<feature type="signal peptide" evidence="2">
    <location>
        <begin position="1"/>
        <end position="22"/>
    </location>
</feature>
<feature type="chain" id="PRO_0000343798" description="Glycosylphosphatidylinositol-anchored high density lipoprotein-binding protein 1">
    <location>
        <begin position="23"/>
        <end position="198"/>
    </location>
</feature>
<feature type="propeptide" id="PRO_0000429859" description="Removed in mature form" evidence="13">
    <location>
        <begin position="199"/>
        <end position="228"/>
    </location>
</feature>
<feature type="domain" description="UPAR/Ly6" evidence="2">
    <location>
        <begin position="61"/>
        <end position="148"/>
    </location>
</feature>
<feature type="region of interest" description="Disordered" evidence="1">
    <location>
        <begin position="21"/>
        <end position="32"/>
    </location>
</feature>
<feature type="region of interest" description="Important for LPL transport to the lumenal surface of endothelial cells" evidence="8">
    <location>
        <begin position="24"/>
        <end position="48"/>
    </location>
</feature>
<feature type="region of interest" description="Important for interaction with LPL" evidence="1">
    <location>
        <begin position="102"/>
        <end position="108"/>
    </location>
</feature>
<feature type="region of interest" description="Disordered" evidence="3">
    <location>
        <begin position="145"/>
        <end position="200"/>
    </location>
</feature>
<feature type="compositionally biased region" description="Acidic residues" evidence="3">
    <location>
        <begin position="24"/>
        <end position="49"/>
    </location>
</feature>
<feature type="modified residue" description="Sulfotyrosine" evidence="1">
    <location>
        <position position="35"/>
    </location>
</feature>
<feature type="lipid moiety-binding region" description="GPI-anchor amidated glycine" evidence="14">
    <location>
        <position position="198"/>
    </location>
</feature>
<feature type="glycosylation site" description="N-linked (GlcNAc...) asparagine" evidence="6">
    <location>
        <position position="76"/>
    </location>
</feature>
<feature type="disulfide bond" evidence="1">
    <location>
        <begin position="63"/>
        <end position="88"/>
    </location>
</feature>
<feature type="disulfide bond" evidence="1">
    <location>
        <begin position="66"/>
        <end position="75"/>
    </location>
</feature>
<feature type="disulfide bond" evidence="1">
    <location>
        <begin position="81"/>
        <end position="109"/>
    </location>
</feature>
<feature type="disulfide bond" evidence="1">
    <location>
        <begin position="113"/>
        <end position="129"/>
    </location>
</feature>
<feature type="disulfide bond" evidence="1">
    <location>
        <begin position="130"/>
        <end position="135"/>
    </location>
</feature>
<feature type="mutagenesis site" description="Nearly abolishes LPL transport to the lumenal surface of endothelial cells." evidence="8">
    <original>EDGDADPEPENYNYDDDDDEEEEEE</original>
    <variation>AAGAAAPAPANYNYAAAAAAAAAAA</variation>
    <location>
        <begin position="24"/>
        <end position="48"/>
    </location>
</feature>
<feature type="mutagenesis site" description="Reduced number of monomers." evidence="10">
    <original>C</original>
    <variation>A</variation>
    <location>
        <position position="88"/>
    </location>
</feature>
<feature type="mutagenesis site" description="Loss of interaction with LPL." evidence="7">
    <original>Q</original>
    <variation>P</variation>
    <location>
        <position position="114"/>
    </location>
</feature>
<comment type="function">
    <text evidence="4 5 6 8 9 11">Mediates the transport of lipoprotein lipase LPL from the basolateral to the apical surface of endothelial cells in capillaries (PubMed:20620994). Anchors LPL on the surface of endothelial cells in the lumen of blood capillaries (PubMed:20620994, PubMed:24726386, PubMed:27811232). Thereby, plays an important role in lipolytic processing of chylomicrons by LPL, triglyceride metabolism and lipid homeostasis (PubMed:17403372). Binds chylomicrons and phospholipid particles that contain APOA5 (PubMed:18340083). Binds high-density lipoprotein (HDL) and plays a role in the uptake of lipids from HDL (PubMed:12496272).</text>
</comment>
<comment type="subunit">
    <text evidence="4 5 6 7 8 9 10 11">Mostly monomer, but also homodimer and homooligomer (PubMed:25387803). Interacts with lipoprotein lipase (LPL) (PubMed:17403372, PubMed:18340083, PubMed:19304573, PubMed:20620994, PubMed:24726386, PubMed:25387803, PubMed:27811232). Interacts with high affinity with high-density lipoprotein (HDL) (PubMed:12496272). Interacts with chylomicrons (PubMed:17403372). Interacts with APOA5 (PubMed:18340083).</text>
</comment>
<comment type="subcellular location">
    <subcellularLocation>
        <location evidence="8">Apical cell membrane</location>
        <topology evidence="5 8 10">Lipid-anchor</topology>
        <topology evidence="5 8 10">GPI-anchor</topology>
    </subcellularLocation>
    <subcellularLocation>
        <location evidence="8">Basolateral cell membrane</location>
        <topology evidence="5 8 10">Lipid-anchor</topology>
        <topology evidence="5 8 10">GPI-anchor</topology>
    </subcellularLocation>
    <subcellularLocation>
        <location evidence="5 6 8 10">Cell membrane</location>
        <topology evidence="5 6 8 10">Lipid-anchor</topology>
        <topology evidence="5 6 8 10">GPI-anchor</topology>
    </subcellularLocation>
</comment>
<comment type="tissue specificity">
    <text evidence="4 5 6 8">Detected in fat tissue (PubMed:17403372, PubMed:18340083). Detected on the luminal surface of capillary endothelial cells in heart, skeletal muscle and brown adipose tissue (at protein level) (PubMed:17403372, PubMed:20620994). Detected in heart and brown adipose tissue (PubMed:12496272, PubMed:17403372). Expressed at lower levels in lung and liver (PubMed:12496272).</text>
</comment>
<comment type="induction">
    <text evidence="5">Induced by fasting.</text>
</comment>
<comment type="domain">
    <text evidence="1 8">The N-terminal acidic region is intrinsically disordered (By similarity). This region contributes to LPL binding (PubMed:20620994). It stabilizes LPL and protects LPL against loss of activity (By similarity).</text>
</comment>
<comment type="PTM">
    <text evidence="6">Glycosylation of Asn-76 is critical for cell surface localization.</text>
</comment>
<comment type="PTM">
    <text evidence="1">Sulfation of a Tyr in the N-terminal acidic region increases the affinity for LPL.</text>
</comment>
<comment type="disruption phenotype">
    <text evidence="5 8 9 11">Adult mice display chylomicronemia when kept on a normal chow diet, with milky-looking blood plasma due to marked accumulation of chylomicrons in the plasma. Their plasma triglyceride levels are generally above 1000 mg/dl and can be as high as 5000 mg/dl. Mice display decreased plasma levels of lipoprotein lipase LPL (PubMed:17403372). Contrary to wild-type, LPL is not recruited to the apical surface of endothelial cell that faces the lumen of capillaries, but is mislocalized to the interstitial spaces surrounding myocytes and adipocytes (PubMed:20620994, PubMed:24726386, PubMed:27811232).</text>
</comment>
<organism>
    <name type="scientific">Mus musculus</name>
    <name type="common">Mouse</name>
    <dbReference type="NCBI Taxonomy" id="10090"/>
    <lineage>
        <taxon>Eukaryota</taxon>
        <taxon>Metazoa</taxon>
        <taxon>Chordata</taxon>
        <taxon>Craniata</taxon>
        <taxon>Vertebrata</taxon>
        <taxon>Euteleostomi</taxon>
        <taxon>Mammalia</taxon>
        <taxon>Eutheria</taxon>
        <taxon>Euarchontoglires</taxon>
        <taxon>Glires</taxon>
        <taxon>Rodentia</taxon>
        <taxon>Myomorpha</taxon>
        <taxon>Muroidea</taxon>
        <taxon>Muridae</taxon>
        <taxon>Murinae</taxon>
        <taxon>Mus</taxon>
        <taxon>Mus</taxon>
    </lineage>
</organism>
<reference evidence="13 17" key="1">
    <citation type="journal article" date="2003" name="J. Biol. Chem.">
        <title>Expression cloning and characterization of a novel glycosylphosphatidylinositol-anchored high density lipoprotein-binding protein, GPI-HBP1.</title>
        <authorList>
            <person name="Ioka R.X."/>
            <person name="Kang M.-J."/>
            <person name="Kamiyama S."/>
            <person name="Kim D.-H."/>
            <person name="Magoori K."/>
            <person name="Kamataki A."/>
            <person name="Ito Y."/>
            <person name="Takei Y.A."/>
            <person name="Sasaki M."/>
            <person name="Suzuki T."/>
            <person name="Sasano H."/>
            <person name="Takahashi S."/>
            <person name="Sakai J."/>
            <person name="Fujino T."/>
            <person name="Yamamoto T.T."/>
        </authorList>
    </citation>
    <scope>NUCLEOTIDE SEQUENCE [MRNA]</scope>
    <scope>FUNCTION</scope>
    <scope>HDL-BINDING</scope>
    <scope>SUBCELLULAR LOCATION</scope>
    <scope>TISSUE SPECIFICITY</scope>
    <scope>GPI-ANCHOR AT GLY-198</scope>
    <source>
        <tissue evidence="4">Liver</tissue>
    </source>
</reference>
<reference evidence="16" key="2">
    <citation type="journal article" date="2005" name="Science">
        <title>The transcriptional landscape of the mammalian genome.</title>
        <authorList>
            <person name="Carninci P."/>
            <person name="Kasukawa T."/>
            <person name="Katayama S."/>
            <person name="Gough J."/>
            <person name="Frith M.C."/>
            <person name="Maeda N."/>
            <person name="Oyama R."/>
            <person name="Ravasi T."/>
            <person name="Lenhard B."/>
            <person name="Wells C."/>
            <person name="Kodzius R."/>
            <person name="Shimokawa K."/>
            <person name="Bajic V.B."/>
            <person name="Brenner S.E."/>
            <person name="Batalov S."/>
            <person name="Forrest A.R."/>
            <person name="Zavolan M."/>
            <person name="Davis M.J."/>
            <person name="Wilming L.G."/>
            <person name="Aidinis V."/>
            <person name="Allen J.E."/>
            <person name="Ambesi-Impiombato A."/>
            <person name="Apweiler R."/>
            <person name="Aturaliya R.N."/>
            <person name="Bailey T.L."/>
            <person name="Bansal M."/>
            <person name="Baxter L."/>
            <person name="Beisel K.W."/>
            <person name="Bersano T."/>
            <person name="Bono H."/>
            <person name="Chalk A.M."/>
            <person name="Chiu K.P."/>
            <person name="Choudhary V."/>
            <person name="Christoffels A."/>
            <person name="Clutterbuck D.R."/>
            <person name="Crowe M.L."/>
            <person name="Dalla E."/>
            <person name="Dalrymple B.P."/>
            <person name="de Bono B."/>
            <person name="Della Gatta G."/>
            <person name="di Bernardo D."/>
            <person name="Down T."/>
            <person name="Engstrom P."/>
            <person name="Fagiolini M."/>
            <person name="Faulkner G."/>
            <person name="Fletcher C.F."/>
            <person name="Fukushima T."/>
            <person name="Furuno M."/>
            <person name="Futaki S."/>
            <person name="Gariboldi M."/>
            <person name="Georgii-Hemming P."/>
            <person name="Gingeras T.R."/>
            <person name="Gojobori T."/>
            <person name="Green R.E."/>
            <person name="Gustincich S."/>
            <person name="Harbers M."/>
            <person name="Hayashi Y."/>
            <person name="Hensch T.K."/>
            <person name="Hirokawa N."/>
            <person name="Hill D."/>
            <person name="Huminiecki L."/>
            <person name="Iacono M."/>
            <person name="Ikeo K."/>
            <person name="Iwama A."/>
            <person name="Ishikawa T."/>
            <person name="Jakt M."/>
            <person name="Kanapin A."/>
            <person name="Katoh M."/>
            <person name="Kawasawa Y."/>
            <person name="Kelso J."/>
            <person name="Kitamura H."/>
            <person name="Kitano H."/>
            <person name="Kollias G."/>
            <person name="Krishnan S.P."/>
            <person name="Kruger A."/>
            <person name="Kummerfeld S.K."/>
            <person name="Kurochkin I.V."/>
            <person name="Lareau L.F."/>
            <person name="Lazarevic D."/>
            <person name="Lipovich L."/>
            <person name="Liu J."/>
            <person name="Liuni S."/>
            <person name="McWilliam S."/>
            <person name="Madan Babu M."/>
            <person name="Madera M."/>
            <person name="Marchionni L."/>
            <person name="Matsuda H."/>
            <person name="Matsuzawa S."/>
            <person name="Miki H."/>
            <person name="Mignone F."/>
            <person name="Miyake S."/>
            <person name="Morris K."/>
            <person name="Mottagui-Tabar S."/>
            <person name="Mulder N."/>
            <person name="Nakano N."/>
            <person name="Nakauchi H."/>
            <person name="Ng P."/>
            <person name="Nilsson R."/>
            <person name="Nishiguchi S."/>
            <person name="Nishikawa S."/>
            <person name="Nori F."/>
            <person name="Ohara O."/>
            <person name="Okazaki Y."/>
            <person name="Orlando V."/>
            <person name="Pang K.C."/>
            <person name="Pavan W.J."/>
            <person name="Pavesi G."/>
            <person name="Pesole G."/>
            <person name="Petrovsky N."/>
            <person name="Piazza S."/>
            <person name="Reed J."/>
            <person name="Reid J.F."/>
            <person name="Ring B.Z."/>
            <person name="Ringwald M."/>
            <person name="Rost B."/>
            <person name="Ruan Y."/>
            <person name="Salzberg S.L."/>
            <person name="Sandelin A."/>
            <person name="Schneider C."/>
            <person name="Schoenbach C."/>
            <person name="Sekiguchi K."/>
            <person name="Semple C.A."/>
            <person name="Seno S."/>
            <person name="Sessa L."/>
            <person name="Sheng Y."/>
            <person name="Shibata Y."/>
            <person name="Shimada H."/>
            <person name="Shimada K."/>
            <person name="Silva D."/>
            <person name="Sinclair B."/>
            <person name="Sperling S."/>
            <person name="Stupka E."/>
            <person name="Sugiura K."/>
            <person name="Sultana R."/>
            <person name="Takenaka Y."/>
            <person name="Taki K."/>
            <person name="Tammoja K."/>
            <person name="Tan S.L."/>
            <person name="Tang S."/>
            <person name="Taylor M.S."/>
            <person name="Tegner J."/>
            <person name="Teichmann S.A."/>
            <person name="Ueda H.R."/>
            <person name="van Nimwegen E."/>
            <person name="Verardo R."/>
            <person name="Wei C.L."/>
            <person name="Yagi K."/>
            <person name="Yamanishi H."/>
            <person name="Zabarovsky E."/>
            <person name="Zhu S."/>
            <person name="Zimmer A."/>
            <person name="Hide W."/>
            <person name="Bult C."/>
            <person name="Grimmond S.M."/>
            <person name="Teasdale R.D."/>
            <person name="Liu E.T."/>
            <person name="Brusic V."/>
            <person name="Quackenbush J."/>
            <person name="Wahlestedt C."/>
            <person name="Mattick J.S."/>
            <person name="Hume D.A."/>
            <person name="Kai C."/>
            <person name="Sasaki D."/>
            <person name="Tomaru Y."/>
            <person name="Fukuda S."/>
            <person name="Kanamori-Katayama M."/>
            <person name="Suzuki M."/>
            <person name="Aoki J."/>
            <person name="Arakawa T."/>
            <person name="Iida J."/>
            <person name="Imamura K."/>
            <person name="Itoh M."/>
            <person name="Kato T."/>
            <person name="Kawaji H."/>
            <person name="Kawagashira N."/>
            <person name="Kawashima T."/>
            <person name="Kojima M."/>
            <person name="Kondo S."/>
            <person name="Konno H."/>
            <person name="Nakano K."/>
            <person name="Ninomiya N."/>
            <person name="Nishio T."/>
            <person name="Okada M."/>
            <person name="Plessy C."/>
            <person name="Shibata K."/>
            <person name="Shiraki T."/>
            <person name="Suzuki S."/>
            <person name="Tagami M."/>
            <person name="Waki K."/>
            <person name="Watahiki A."/>
            <person name="Okamura-Oho Y."/>
            <person name="Suzuki H."/>
            <person name="Kawai J."/>
            <person name="Hayashizaki Y."/>
        </authorList>
    </citation>
    <scope>NUCLEOTIDE SEQUENCE [LARGE SCALE MRNA]</scope>
    <source>
        <strain evidence="16">C57BL/6J</strain>
        <tissue evidence="16">Embryo</tissue>
    </source>
</reference>
<reference evidence="15" key="3">
    <citation type="journal article" date="2004" name="Genome Res.">
        <title>The status, quality, and expansion of the NIH full-length cDNA project: the Mammalian Gene Collection (MGC).</title>
        <authorList>
            <consortium name="The MGC Project Team"/>
        </authorList>
    </citation>
    <scope>NUCLEOTIDE SEQUENCE [LARGE SCALE MRNA]</scope>
</reference>
<reference evidence="13" key="4">
    <citation type="journal article" date="2007" name="Cell Metab.">
        <title>Glycosylphosphatidylinositol-anchored high-density lipoprotein-binding protein 1 plays a critical role in the lipolytic processing of chylomicrons.</title>
        <authorList>
            <person name="Beigneux A.P."/>
            <person name="Davies B.S.J."/>
            <person name="Gin P."/>
            <person name="Weinstein M.M."/>
            <person name="Farber E."/>
            <person name="Qiao X."/>
            <person name="Peale F."/>
            <person name="Bunting S."/>
            <person name="Walzem R.L."/>
            <person name="Wong J.S."/>
            <person name="Blaner W.S."/>
            <person name="Ding Z.-M."/>
            <person name="Melford K."/>
            <person name="Wongsiriroj N."/>
            <person name="Shu X."/>
            <person name="de Sauvage F."/>
            <person name="Ryan R.O."/>
            <person name="Fong L.G."/>
            <person name="Bensadoun A."/>
            <person name="Young S.G."/>
        </authorList>
    </citation>
    <scope>FUNCTION</scope>
    <scope>INTERACTION WITH LPL</scope>
    <scope>SUBCELLULAR LOCATION</scope>
    <scope>SUBUNIT</scope>
    <scope>TISSUE SPECIFICITY</scope>
    <scope>DISRUPTION PHENOTYPE</scope>
    <scope>INDUCTION BY FASTING</scope>
</reference>
<reference evidence="13" key="5">
    <citation type="journal article" date="2007" name="Curr. Opin. Lipidol.">
        <title>GPIHBP1: an endothelial cell molecule important for the lipolytic processing of chylomicrons.</title>
        <authorList>
            <person name="Young S.G."/>
            <person name="Davies B.S.J."/>
            <person name="Fong L.G."/>
            <person name="Gin P."/>
            <person name="Weinstein M.M."/>
            <person name="Bensadoun A."/>
            <person name="Beigneux A.P."/>
        </authorList>
    </citation>
    <scope>REVIEW</scope>
</reference>
<reference key="6">
    <citation type="journal article" date="2008" name="J. Lipid Res.">
        <title>Glycosylation of Asn-76 in mouse GPIHBP1 is critical for its appearance on the cell surface and the binding of chylomicrons and lipoprotein lipase.</title>
        <authorList>
            <person name="Beigneux A.P."/>
            <person name="Gin P."/>
            <person name="Davies B.S."/>
            <person name="Weinstein M.M."/>
            <person name="Bensadoun A."/>
            <person name="Ryan R.O."/>
            <person name="Fong L.G."/>
            <person name="Young S.G."/>
        </authorList>
    </citation>
    <scope>FUNCTION</scope>
    <scope>GLYCOSYLATION AT ASN-76</scope>
    <scope>SUBCELLULAR LOCATION</scope>
    <scope>INTERACTION WITH LPL AND APOA5</scope>
    <scope>TISSUE SPECIFICITY</scope>
</reference>
<reference key="7">
    <citation type="journal article" date="2009" name="Arterioscler. Thromb. Vasc. Biol.">
        <title>Chylomicronemia with a mutant GPIHBP1 (Q115P) that cannot bind lipoprotein lipase.</title>
        <authorList>
            <person name="Beigneux A.P."/>
            <person name="Franssen R."/>
            <person name="Bensadoun A."/>
            <person name="Gin P."/>
            <person name="Melford K."/>
            <person name="Peter J."/>
            <person name="Walzem R.L."/>
            <person name="Weinstein M.M."/>
            <person name="Davies B.S.J."/>
            <person name="Kuivenhoven J.A."/>
            <person name="Kastelein J.J.P."/>
            <person name="Fong L.G."/>
            <person name="Dallinga-Thie G.M."/>
            <person name="Young S.G."/>
        </authorList>
    </citation>
    <scope>MUTAGENESIS OF GLN-114</scope>
    <scope>INTERACTION WITH LPL</scope>
</reference>
<reference key="8">
    <citation type="journal article" date="2010" name="Cell">
        <title>A tissue-specific atlas of mouse protein phosphorylation and expression.</title>
        <authorList>
            <person name="Huttlin E.L."/>
            <person name="Jedrychowski M.P."/>
            <person name="Elias J.E."/>
            <person name="Goswami T."/>
            <person name="Rad R."/>
            <person name="Beausoleil S.A."/>
            <person name="Villen J."/>
            <person name="Haas W."/>
            <person name="Sowa M.E."/>
            <person name="Gygi S.P."/>
        </authorList>
    </citation>
    <scope>IDENTIFICATION BY MASS SPECTROMETRY [LARGE SCALE ANALYSIS]</scope>
    <source>
        <tissue>Brown adipose tissue</tissue>
        <tissue>Lung</tissue>
    </source>
</reference>
<reference key="9">
    <citation type="journal article" date="2010" name="Cell Metab.">
        <title>GPIHBP1 is responsible for the entry of lipoprotein lipase into capillaries.</title>
        <authorList>
            <person name="Davies B.S."/>
            <person name="Beigneux A.P."/>
            <person name="Barnes R.H. II"/>
            <person name="Tu Y."/>
            <person name="Gin P."/>
            <person name="Weinstein M.M."/>
            <person name="Nobumori C."/>
            <person name="Nyren R."/>
            <person name="Goldberg I."/>
            <person name="Olivecrona G."/>
            <person name="Bensadoun A."/>
            <person name="Young S.G."/>
            <person name="Fong L.G."/>
        </authorList>
    </citation>
    <scope>FUNCTION</scope>
    <scope>SUBCELLULAR LOCATION</scope>
    <scope>INTERACTION WITH LPL</scope>
    <scope>DISRUPTION PHENOTYPE</scope>
    <scope>TISSUE SPECIFICITY</scope>
    <scope>DOMAIN</scope>
    <scope>MUTAGENESIS OF 24-GLU--GLU-48</scope>
</reference>
<reference key="10">
    <citation type="journal article" date="2011" name="J. Lipid Res.">
        <title>GPIHBP1, an endothelial cell transporter for lipoprotein lipase.</title>
        <authorList>
            <person name="Young S.G."/>
            <person name="Davies B.S."/>
            <person name="Voss C.V."/>
            <person name="Gin P."/>
            <person name="Weinstein M.M."/>
            <person name="Tontonoz P."/>
            <person name="Reue K."/>
            <person name="Bensadoun A."/>
            <person name="Fong L.G."/>
            <person name="Beigneux A.P."/>
        </authorList>
    </citation>
    <scope>REVIEW</scope>
</reference>
<reference key="11">
    <citation type="journal article" date="2014" name="Cell Metab.">
        <title>The GPIHBP1-LPL complex is responsible for the margination of triglyceride-rich lipoproteins in capillaries.</title>
        <authorList>
            <person name="Goulbourne C.N."/>
            <person name="Gin P."/>
            <person name="Tatar A."/>
            <person name="Nobumori C."/>
            <person name="Hoenger A."/>
            <person name="Jiang H."/>
            <person name="Grovenor C.R."/>
            <person name="Adeyo O."/>
            <person name="Esko J.D."/>
            <person name="Goldberg I.J."/>
            <person name="Reue K."/>
            <person name="Tontonoz P."/>
            <person name="Bensadoun A."/>
            <person name="Beigneux A.P."/>
            <person name="Young S.G."/>
            <person name="Fong L.G."/>
        </authorList>
    </citation>
    <scope>FUNCTION</scope>
    <scope>DISRUPTION PHENOTYPE</scope>
    <scope>INTERACTION WITH LPL</scope>
</reference>
<reference key="12">
    <citation type="journal article" date="2015" name="Circ. Res.">
        <title>GPIHBP1 missense mutations often cause multimerization of GPIHBP1 and thereby prevent lipoprotein lipase binding.</title>
        <authorList>
            <person name="Beigneux A.P."/>
            <person name="Fong L.G."/>
            <person name="Bensadoun A."/>
            <person name="Davies B.S."/>
            <person name="Oberer M."/>
            <person name="Gaardsvoll H."/>
            <person name="Ploug M."/>
            <person name="Young S.G."/>
        </authorList>
    </citation>
    <scope>SUBCELLULAR LOCATION</scope>
    <scope>SUBUNIT</scope>
    <scope>MUTAGENESIS OF CYS-88</scope>
</reference>
<reference key="13">
    <citation type="journal article" date="2017" name="J. Lipid Res.">
        <title>Mobility of 'HSPG-bound' LPL explains how LPL is able to reach GPIHBP1 on capillaries.</title>
        <authorList>
            <person name="Allan C.M."/>
            <person name="Larsson M."/>
            <person name="Jung R.S."/>
            <person name="Ploug M."/>
            <person name="Bensadoun A."/>
            <person name="Beigneux A.P."/>
            <person name="Fong L.G."/>
            <person name="Young S.G."/>
        </authorList>
    </citation>
    <scope>FUNCTION</scope>
    <scope>INTERACTION WITH LPL</scope>
    <scope>DISRUPTION PHENOTYPE</scope>
</reference>
<dbReference type="EMBL" id="AB095543">
    <property type="protein sequence ID" value="BAC23061.1"/>
    <property type="molecule type" value="mRNA"/>
</dbReference>
<dbReference type="EMBL" id="AK003305">
    <property type="protein sequence ID" value="BAB22704.1"/>
    <property type="molecule type" value="mRNA"/>
</dbReference>
<dbReference type="EMBL" id="BC061225">
    <property type="protein sequence ID" value="AAH61225.1"/>
    <property type="molecule type" value="mRNA"/>
</dbReference>
<dbReference type="CCDS" id="CCDS27545.1"/>
<dbReference type="RefSeq" id="NP_081006.1">
    <property type="nucleotide sequence ID" value="NM_026730.2"/>
</dbReference>
<dbReference type="SMR" id="Q9D1N2"/>
<dbReference type="FunCoup" id="Q9D1N2">
    <property type="interactions" value="20"/>
</dbReference>
<dbReference type="STRING" id="10090.ENSMUSP00000023243"/>
<dbReference type="GlyCosmos" id="Q9D1N2">
    <property type="glycosylation" value="1 site, No reported glycans"/>
</dbReference>
<dbReference type="GlyGen" id="Q9D1N2">
    <property type="glycosylation" value="1 site"/>
</dbReference>
<dbReference type="iPTMnet" id="Q9D1N2"/>
<dbReference type="PhosphoSitePlus" id="Q9D1N2"/>
<dbReference type="PaxDb" id="10090-ENSMUSP00000023243"/>
<dbReference type="PeptideAtlas" id="Q9D1N2"/>
<dbReference type="ProteomicsDB" id="269685"/>
<dbReference type="Antibodypedia" id="75628">
    <property type="antibodies" value="190 antibodies from 19 providers"/>
</dbReference>
<dbReference type="DNASU" id="68453"/>
<dbReference type="Ensembl" id="ENSMUST00000023243.11">
    <property type="protein sequence ID" value="ENSMUSP00000023243.5"/>
    <property type="gene ID" value="ENSMUSG00000022579.11"/>
</dbReference>
<dbReference type="GeneID" id="68453"/>
<dbReference type="KEGG" id="mmu:68453"/>
<dbReference type="UCSC" id="uc007wgw.1">
    <property type="organism name" value="mouse"/>
</dbReference>
<dbReference type="AGR" id="MGI:1915703"/>
<dbReference type="CTD" id="338328"/>
<dbReference type="MGI" id="MGI:1915703">
    <property type="gene designation" value="Gpihbp1"/>
</dbReference>
<dbReference type="VEuPathDB" id="HostDB:ENSMUSG00000022579"/>
<dbReference type="eggNOG" id="ENOG502SVBD">
    <property type="taxonomic scope" value="Eukaryota"/>
</dbReference>
<dbReference type="GeneTree" id="ENSGT00940000153378"/>
<dbReference type="HOGENOM" id="CLU_102231_0_0_1"/>
<dbReference type="InParanoid" id="Q9D1N2"/>
<dbReference type="OMA" id="MWCTDSC"/>
<dbReference type="OrthoDB" id="9448168at2759"/>
<dbReference type="PhylomeDB" id="Q9D1N2"/>
<dbReference type="TreeFam" id="TF338440"/>
<dbReference type="Reactome" id="R-MMU-163125">
    <property type="pathway name" value="Post-translational modification: synthesis of GPI-anchored proteins"/>
</dbReference>
<dbReference type="Reactome" id="R-MMU-8963889">
    <property type="pathway name" value="Assembly of active LPL and LIPC lipase complexes"/>
</dbReference>
<dbReference type="Reactome" id="R-MMU-8963901">
    <property type="pathway name" value="Chylomicron remodeling"/>
</dbReference>
<dbReference type="Reactome" id="R-MMU-975634">
    <property type="pathway name" value="Retinoid metabolism and transport"/>
</dbReference>
<dbReference type="BioGRID-ORCS" id="68453">
    <property type="hits" value="3 hits in 78 CRISPR screens"/>
</dbReference>
<dbReference type="ChiTaRS" id="Gpihbp1">
    <property type="organism name" value="mouse"/>
</dbReference>
<dbReference type="PRO" id="PR:Q9D1N2"/>
<dbReference type="Proteomes" id="UP000000589">
    <property type="component" value="Chromosome 15"/>
</dbReference>
<dbReference type="RNAct" id="Q9D1N2">
    <property type="molecule type" value="protein"/>
</dbReference>
<dbReference type="Bgee" id="ENSMUSG00000022579">
    <property type="expression patterns" value="Expressed in right lung and 122 other cell types or tissues"/>
</dbReference>
<dbReference type="ExpressionAtlas" id="Q9D1N2">
    <property type="expression patterns" value="baseline and differential"/>
</dbReference>
<dbReference type="GO" id="GO:0016324">
    <property type="term" value="C:apical plasma membrane"/>
    <property type="evidence" value="ECO:0000314"/>
    <property type="project" value="BHF-UCL"/>
</dbReference>
<dbReference type="GO" id="GO:0016323">
    <property type="term" value="C:basolateral plasma membrane"/>
    <property type="evidence" value="ECO:0000314"/>
    <property type="project" value="BHF-UCL"/>
</dbReference>
<dbReference type="GO" id="GO:0009986">
    <property type="term" value="C:cell surface"/>
    <property type="evidence" value="ECO:0000314"/>
    <property type="project" value="MGI"/>
</dbReference>
<dbReference type="GO" id="GO:0009897">
    <property type="term" value="C:external side of plasma membrane"/>
    <property type="evidence" value="ECO:0000314"/>
    <property type="project" value="BHF-UCL"/>
</dbReference>
<dbReference type="GO" id="GO:0005886">
    <property type="term" value="C:plasma membrane"/>
    <property type="evidence" value="ECO:0000314"/>
    <property type="project" value="MGI"/>
</dbReference>
<dbReference type="GO" id="GO:0035478">
    <property type="term" value="F:chylomicron binding"/>
    <property type="evidence" value="ECO:0000315"/>
    <property type="project" value="BHF-UCL"/>
</dbReference>
<dbReference type="GO" id="GO:0008035">
    <property type="term" value="F:high-density lipoprotein particle binding"/>
    <property type="evidence" value="ECO:0000314"/>
    <property type="project" value="MGI"/>
</dbReference>
<dbReference type="GO" id="GO:0035473">
    <property type="term" value="F:lipase binding"/>
    <property type="evidence" value="ECO:0000353"/>
    <property type="project" value="BHF-UCL"/>
</dbReference>
<dbReference type="GO" id="GO:0008289">
    <property type="term" value="F:lipid binding"/>
    <property type="evidence" value="ECO:0007669"/>
    <property type="project" value="UniProtKB-KW"/>
</dbReference>
<dbReference type="GO" id="GO:0060230">
    <property type="term" value="F:lipoprotein lipase activator activity"/>
    <property type="evidence" value="ECO:0000315"/>
    <property type="project" value="BHF-UCL"/>
</dbReference>
<dbReference type="GO" id="GO:0071813">
    <property type="term" value="F:lipoprotein particle binding"/>
    <property type="evidence" value="ECO:0000315"/>
    <property type="project" value="UniProtKB"/>
</dbReference>
<dbReference type="GO" id="GO:0140318">
    <property type="term" value="F:protein transporter activity"/>
    <property type="evidence" value="ECO:0000314"/>
    <property type="project" value="BHF-UCL"/>
</dbReference>
<dbReference type="GO" id="GO:0042632">
    <property type="term" value="P:cholesterol homeostasis"/>
    <property type="evidence" value="ECO:0000315"/>
    <property type="project" value="BHF-UCL"/>
</dbReference>
<dbReference type="GO" id="GO:0006886">
    <property type="term" value="P:intracellular protein transport"/>
    <property type="evidence" value="ECO:0000314"/>
    <property type="project" value="BHF-UCL"/>
</dbReference>
<dbReference type="GO" id="GO:0006869">
    <property type="term" value="P:lipid transport"/>
    <property type="evidence" value="ECO:0000314"/>
    <property type="project" value="MGI"/>
</dbReference>
<dbReference type="GO" id="GO:0090321">
    <property type="term" value="P:positive regulation of chylomicron remnant clearance"/>
    <property type="evidence" value="ECO:0000315"/>
    <property type="project" value="BHF-UCL"/>
</dbReference>
<dbReference type="GO" id="GO:0090319">
    <property type="term" value="P:positive regulation of chylomicron remodeling"/>
    <property type="evidence" value="ECO:0000314"/>
    <property type="project" value="BHF-UCL"/>
</dbReference>
<dbReference type="GO" id="GO:0010902">
    <property type="term" value="P:positive regulation of very-low-density lipoprotein particle remodeling"/>
    <property type="evidence" value="ECO:0000314"/>
    <property type="project" value="BHF-UCL"/>
</dbReference>
<dbReference type="GO" id="GO:0017038">
    <property type="term" value="P:protein import"/>
    <property type="evidence" value="ECO:0000314"/>
    <property type="project" value="BHF-UCL"/>
</dbReference>
<dbReference type="GO" id="GO:0034394">
    <property type="term" value="P:protein localization to cell surface"/>
    <property type="evidence" value="ECO:0000314"/>
    <property type="project" value="BHF-UCL"/>
</dbReference>
<dbReference type="GO" id="GO:0050821">
    <property type="term" value="P:protein stabilization"/>
    <property type="evidence" value="ECO:0000314"/>
    <property type="project" value="BHF-UCL"/>
</dbReference>
<dbReference type="GO" id="GO:0045056">
    <property type="term" value="P:transcytosis"/>
    <property type="evidence" value="ECO:0000314"/>
    <property type="project" value="BHF-UCL"/>
</dbReference>
<dbReference type="GO" id="GO:0070328">
    <property type="term" value="P:triglyceride homeostasis"/>
    <property type="evidence" value="ECO:0000315"/>
    <property type="project" value="BHF-UCL"/>
</dbReference>
<dbReference type="CDD" id="cd23575">
    <property type="entry name" value="TFP_LU_ECD_GPIHBP1"/>
    <property type="match status" value="1"/>
</dbReference>
<dbReference type="FunFam" id="2.10.60.10:FF:000003">
    <property type="entry name" value="lymphocyte antigen 6E isoform X1"/>
    <property type="match status" value="1"/>
</dbReference>
<dbReference type="Gene3D" id="2.10.60.10">
    <property type="entry name" value="CD59"/>
    <property type="match status" value="1"/>
</dbReference>
<dbReference type="InterPro" id="IPR018363">
    <property type="entry name" value="CD59_antigen_CS"/>
</dbReference>
<dbReference type="InterPro" id="IPR051110">
    <property type="entry name" value="Ly-6/neurotoxin-like_GPI-ap"/>
</dbReference>
<dbReference type="InterPro" id="IPR045860">
    <property type="entry name" value="Snake_toxin-like_sf"/>
</dbReference>
<dbReference type="InterPro" id="IPR035076">
    <property type="entry name" value="Toxin/TOLIP"/>
</dbReference>
<dbReference type="PANTHER" id="PTHR16983:SF12">
    <property type="entry name" value="GLYCOSYLPHOSPHATIDYLINOSITOL-ANCHORED HIGH DENSITY LIPOPROTEIN-BINDING PROTEIN 1"/>
    <property type="match status" value="1"/>
</dbReference>
<dbReference type="PANTHER" id="PTHR16983">
    <property type="entry name" value="UPAR/LY6 DOMAIN-CONTAINING PROTEIN"/>
    <property type="match status" value="1"/>
</dbReference>
<dbReference type="Pfam" id="PF00087">
    <property type="entry name" value="Toxin_TOLIP"/>
    <property type="match status" value="1"/>
</dbReference>
<dbReference type="SUPFAM" id="SSF57302">
    <property type="entry name" value="Snake toxin-like"/>
    <property type="match status" value="1"/>
</dbReference>
<dbReference type="PROSITE" id="PS00983">
    <property type="entry name" value="LY6_UPAR"/>
    <property type="match status" value="1"/>
</dbReference>
<sequence>MKALRAVLLILLLSGQPGSGWAQEDGDADPEPENYNYDDDDDEEEEEETNMIPGSRDRAPLQCYFCQVLHSGESCNQTQSCSSSKPFCITLVSHSGTDKGYLTTYSMWCTDTCQPIIKTVGGTQMTQTCCQSTLCNIPPWQNPQVQNPLGGRADSPLESGTRHPQGGKFSHPQVVKAAHPQSDGANLPKSGKANQPQGSGAGYPSGWTKFGNIALLLSFFTCLWASGA</sequence>
<proteinExistence type="evidence at protein level"/>